<sequence length="1067" mass="120114">MSSQNSFMASKKEDKGKNIQVVVRCRPFNQLERKASSHSVLECDSQRKEVYVRTGEVNDKLGKKTYTFDMVFGPAAKQIEVYRSVVCPILDEVIMGYNCTIFAYGQTGTGKTFTMEGERSSDEEFTWEQDPLAGIIPRTLHQIFEKLSENGTEFSVKVSLLEIYNEELFDLLSPSPDVGERLQMFDDPRNKRGVIIKGLEEISVHNKDEVYHILERGAARRKTASTLMNAYSSRSHSVFSVTIHMKETTVDGEELVKIGKLNLVDLAGSENIGRSGAVDKRAREAGNINQSLLTLGRVITALVERTPHIPYRESKLTRILQDSLGGRTKTSIIATVSPASINLEETVSTLDYANRAKSIMNKPEVNQKLTKKALIKEYTEEIERLKRELAAAREKNGVYLSSENYEQLQGKVLSQEEMITEYTEKITAMEEELKSISELFADNKKELEECTTILQCKEKELEETQNHLQESKEQLAQESFVVSAFETTEKKLHGTANKLLSTVRETTRDVSGLHEKLDRKKAVDQHNFQVHENFAEQMDRRFSVIQRTVDDYSVKQQGMLDFYTNSIDDLLGASSSRLSATASAVAKSFASVQETVTKQVSHSVEEILKQETLSSQAKGDLQQLMAAHRTGLEEALRSDLLPVVTAVLDLNSHLSHCLQNFLIVADKIDSHKEDMNSFFTEHSRSLHKLRLDSSSALSSIQSEYESLKEDIATAQSMHSEGVNNLISSLQNQLNLLGMETQQQFSGFLSKGGKLQKSVGSLQQDLDLVSSEAIECISSHHKKLAEQSQDVAVEIRQLAGSNMSTLEESSKQCEKLTSSINTISQESQQWCESAGQKIDSVLEEQVCYLHSSKKHLQNLHKGVEDSCGSSVVEITDRVNAQRQAEEKALTSLVEQVRDDQEMVGEQRLELQEQVQSGLNKVHSYLKEELRNDVPTGTTPQRRDYAYPSLLVKTKPRDVLLEQFRQQQQEYLESISSVISEAVEPPVEQDSLEDEPPVAVNDSVISERSCIDLSMTCQEKGGIRFFQQKKALRKEKENRGNTTLLERSKIMDEVDQALTKSKLPLRMQN</sequence>
<keyword id="KW-0067">ATP-binding</keyword>
<keyword id="KW-0131">Cell cycle</keyword>
<keyword id="KW-0132">Cell division</keyword>
<keyword id="KW-0175">Coiled coil</keyword>
<keyword id="KW-0963">Cytoplasm</keyword>
<keyword id="KW-0206">Cytoskeleton</keyword>
<keyword id="KW-0493">Microtubule</keyword>
<keyword id="KW-0498">Mitosis</keyword>
<keyword id="KW-0505">Motor protein</keyword>
<keyword id="KW-0547">Nucleotide-binding</keyword>
<keyword id="KW-0597">Phosphoprotein</keyword>
<keyword id="KW-1185">Reference proteome</keyword>
<evidence type="ECO:0000250" key="1">
    <source>
        <dbReference type="UniProtKB" id="P52732"/>
    </source>
</evidence>
<evidence type="ECO:0000255" key="2"/>
<evidence type="ECO:0000255" key="3">
    <source>
        <dbReference type="PROSITE-ProRule" id="PRU00283"/>
    </source>
</evidence>
<evidence type="ECO:0000269" key="4">
    <source>
    </source>
</evidence>
<evidence type="ECO:0000269" key="5">
    <source>
    </source>
</evidence>
<evidence type="ECO:0000269" key="6">
    <source>
    </source>
</evidence>
<evidence type="ECO:0000269" key="7">
    <source>
    </source>
</evidence>
<evidence type="ECO:0000269" key="8">
    <source>
    </source>
</evidence>
<evidence type="ECO:0000305" key="9"/>
<protein>
    <recommendedName>
        <fullName>Kinesin-like protein KIF11-B</fullName>
    </recommendedName>
    <alternativeName>
        <fullName>Kinesin-5</fullName>
    </alternativeName>
    <alternativeName>
        <fullName>Kinesin-related motor protein Eg5-1</fullName>
        <shortName>XLEg5K1</shortName>
        <shortName>XlEg5</shortName>
    </alternativeName>
</protein>
<accession>P28025</accession>
<comment type="function">
    <text evidence="1 5">Plus end-directed motor protein required for establishing a bipolar spindle (PubMed:15583027). Associates with both interphase and spindle microtubules (PubMed:15583027). May be involved in nuclear divisions taking place during the development of unfertilized eggs (PubMed:15583027). Required in non-mitotic cells for transport of secretory proteins from the Golgi complex to the cell surface (By similarity).</text>
</comment>
<comment type="subunit">
    <text evidence="4">Heterotetramer of two heavy and two light chains. Interacts with aurka.</text>
</comment>
<comment type="subcellular location">
    <subcellularLocation>
        <location>Cytoplasm</location>
    </subcellularLocation>
    <subcellularLocation>
        <location>Cytoplasm</location>
        <location>Cytoskeleton</location>
        <location>Spindle pole</location>
    </subcellularLocation>
    <text>Concentrated around the polar ends of both meiotic and mitotic spindles.</text>
</comment>
<comment type="tissue specificity">
    <text evidence="6">In unfertilized eggs, shows highest expression in the germinal vesicle and radial yolk-poor channels. Also present in testis.</text>
</comment>
<comment type="developmental stage">
    <text evidence="6">Expressed maternally. Expressed in eggs but not oocytes (at protein level). The RNA is subject to translational control and is only adenylated in eggs. Expression stops soon after fertilization, when the mRNA is deadenylated. Not expressed in adults.</text>
</comment>
<comment type="PTM">
    <text evidence="7 8">Phosphorylation of Thr-937 during mitosis controls the association of this protein with the spindle apparatus.</text>
</comment>
<comment type="PTM">
    <text>A subset of this protein primarily localized at the spindle pole is phosphorylated by NEK6 during mitosis.</text>
</comment>
<comment type="PTM">
    <text>Phosphorylated on a serine residue by aurka.</text>
</comment>
<comment type="similarity">
    <text evidence="3">Belongs to the TRAFAC class myosin-kinesin ATPase superfamily. Kinesin family. BimC subfamily.</text>
</comment>
<comment type="sequence caution" evidence="9">
    <conflict type="erroneous initiation">
        <sequence resource="EMBL-CDS" id="CAA37950"/>
    </conflict>
    <text>Truncated N-terminus.</text>
</comment>
<feature type="chain" id="PRO_0000125373" description="Kinesin-like protein KIF11-B">
    <location>
        <begin position="1"/>
        <end position="1067"/>
    </location>
</feature>
<feature type="domain" description="Kinesin motor" evidence="3">
    <location>
        <begin position="18"/>
        <end position="359"/>
    </location>
</feature>
<feature type="coiled-coil region" evidence="2">
    <location>
        <begin position="365"/>
        <end position="480"/>
    </location>
</feature>
<feature type="binding site" evidence="3">
    <location>
        <begin position="105"/>
        <end position="112"/>
    </location>
    <ligand>
        <name>ATP</name>
        <dbReference type="ChEBI" id="CHEBI:30616"/>
    </ligand>
</feature>
<feature type="modified residue" description="Phosphothreonine; by CDK1" evidence="8">
    <location>
        <position position="937"/>
    </location>
</feature>
<feature type="modified residue" description="Phosphoserine; by NEK6" evidence="7">
    <location>
        <position position="1046"/>
    </location>
</feature>
<feature type="mutagenesis site" description="Disrupts microtubule binding." evidence="8">
    <original>T</original>
    <variation>A</variation>
    <location>
        <position position="937"/>
    </location>
</feature>
<organism>
    <name type="scientific">Xenopus laevis</name>
    <name type="common">African clawed frog</name>
    <dbReference type="NCBI Taxonomy" id="8355"/>
    <lineage>
        <taxon>Eukaryota</taxon>
        <taxon>Metazoa</taxon>
        <taxon>Chordata</taxon>
        <taxon>Craniata</taxon>
        <taxon>Vertebrata</taxon>
        <taxon>Euteleostomi</taxon>
        <taxon>Amphibia</taxon>
        <taxon>Batrachia</taxon>
        <taxon>Anura</taxon>
        <taxon>Pipoidea</taxon>
        <taxon>Pipidae</taxon>
        <taxon>Xenopodinae</taxon>
        <taxon>Xenopus</taxon>
        <taxon>Xenopus</taxon>
    </lineage>
</organism>
<reference key="1">
    <citation type="journal article" date="1991" name="Mol. Cell. Biol.">
        <title>Cloning by differential screening of a Xenopus cDNA that encodes a kinesin-related protein.</title>
        <authorList>
            <person name="le Guellec R."/>
            <person name="Paris J."/>
            <person name="Couturier A."/>
            <person name="Roghi C."/>
            <person name="Philippe M."/>
        </authorList>
    </citation>
    <scope>NUCLEOTIDE SEQUENCE [MRNA]</scope>
    <scope>TISSUE SPECIFICITY</scope>
    <scope>DEVELOPMENTAL STAGE</scope>
    <source>
        <tissue>Egg</tissue>
    </source>
</reference>
<reference key="2">
    <citation type="journal article" date="1999" name="J. Biol. Chem.">
        <title>The Xenopus laevis aurora-related protein kinase pEg2 associates with and phosphorylates the kinesin-related protein XlEg5.</title>
        <authorList>
            <person name="Giet R."/>
            <person name="Uzbekov R."/>
            <person name="Cubizolles F."/>
            <person name="Le Guellec K."/>
            <person name="Prigent C."/>
        </authorList>
    </citation>
    <scope>INTERACTION WITH AURKA</scope>
    <scope>SUBCELLULAR LOCATION</scope>
    <scope>SERINE PHOSPHORYLATION</scope>
</reference>
<reference key="3">
    <citation type="journal article" date="2004" name="J. Cell Biol.">
        <title>The kinesin Eg5 drives poleward microtubule flux in Xenopus laevis egg extract spindles.</title>
        <authorList>
            <person name="Miyamoto D.T."/>
            <person name="Perlman Z.E."/>
            <person name="Burbank K.S."/>
            <person name="Groen A.C."/>
            <person name="Mitchison T.J."/>
        </authorList>
    </citation>
    <scope>FUNCTION</scope>
</reference>
<reference key="4">
    <citation type="journal article" date="2008" name="J. Cell Sci.">
        <title>The NIMA-family kinase Nek6 phosphorylates the kinesin Eg5 at a novel site necessary for mitotic spindle formation.</title>
        <authorList>
            <person name="Rapley J."/>
            <person name="Nicolas M."/>
            <person name="Groen A."/>
            <person name="Regue L."/>
            <person name="Bertran M.T."/>
            <person name="Caelles C."/>
            <person name="Avruch J."/>
            <person name="Roig J."/>
        </authorList>
    </citation>
    <scope>SUBCELLULAR LOCATION</scope>
    <scope>PHOSPHORYLATION AT SER-1046</scope>
</reference>
<reference key="5">
    <citation type="journal article" date="2008" name="PLoS ONE">
        <title>Phosphorylation by Cdk1 increases the binding of Eg5 to microtubules in vitro and in Xenopus egg extract spindles.</title>
        <authorList>
            <person name="Cahu J."/>
            <person name="Olichon A."/>
            <person name="Hentrich C."/>
            <person name="Schek H."/>
            <person name="Drinjakovic J."/>
            <person name="Zhang C."/>
            <person name="Doherty-Kirby A."/>
            <person name="Lajoie G."/>
            <person name="Surrey T."/>
        </authorList>
    </citation>
    <scope>PHOSPHORYLATION AT THR-937</scope>
    <scope>MUTAGENESIS OF THR-937</scope>
</reference>
<proteinExistence type="evidence at protein level"/>
<dbReference type="EMBL" id="X54002">
    <property type="protein sequence ID" value="CAA37950.1"/>
    <property type="status" value="ALT_INIT"/>
    <property type="molecule type" value="mRNA"/>
</dbReference>
<dbReference type="PIR" id="A40264">
    <property type="entry name" value="A40264"/>
</dbReference>
<dbReference type="RefSeq" id="NP_001095237.1">
    <property type="nucleotide sequence ID" value="NM_001101767.1"/>
</dbReference>
<dbReference type="SMR" id="P28025"/>
<dbReference type="IntAct" id="P28025">
    <property type="interactions" value="1"/>
</dbReference>
<dbReference type="iPTMnet" id="P28025"/>
<dbReference type="GeneID" id="397908"/>
<dbReference type="KEGG" id="xla:397908"/>
<dbReference type="AGR" id="Xenbase:XB-GENE-6252175"/>
<dbReference type="CTD" id="397908"/>
<dbReference type="Xenbase" id="XB-GENE-6252175">
    <property type="gene designation" value="kif11.S"/>
</dbReference>
<dbReference type="OrthoDB" id="3176171at2759"/>
<dbReference type="Proteomes" id="UP000186698">
    <property type="component" value="Chromosome 7S"/>
</dbReference>
<dbReference type="Bgee" id="397908">
    <property type="expression patterns" value="Expressed in egg cell and 17 other cell types or tissues"/>
</dbReference>
<dbReference type="GO" id="GO:0005813">
    <property type="term" value="C:centrosome"/>
    <property type="evidence" value="ECO:0000314"/>
    <property type="project" value="UniProtKB"/>
</dbReference>
<dbReference type="GO" id="GO:0005737">
    <property type="term" value="C:cytoplasm"/>
    <property type="evidence" value="ECO:0000314"/>
    <property type="project" value="UniProtKB"/>
</dbReference>
<dbReference type="GO" id="GO:0072686">
    <property type="term" value="C:mitotic spindle"/>
    <property type="evidence" value="ECO:0000318"/>
    <property type="project" value="GO_Central"/>
</dbReference>
<dbReference type="GO" id="GO:0005634">
    <property type="term" value="C:nucleus"/>
    <property type="evidence" value="ECO:0000318"/>
    <property type="project" value="GO_Central"/>
</dbReference>
<dbReference type="GO" id="GO:0005876">
    <property type="term" value="C:spindle microtubule"/>
    <property type="evidence" value="ECO:0000314"/>
    <property type="project" value="UniProtKB"/>
</dbReference>
<dbReference type="GO" id="GO:0000922">
    <property type="term" value="C:spindle pole"/>
    <property type="evidence" value="ECO:0000314"/>
    <property type="project" value="UniProtKB"/>
</dbReference>
<dbReference type="GO" id="GO:0005524">
    <property type="term" value="F:ATP binding"/>
    <property type="evidence" value="ECO:0007669"/>
    <property type="project" value="UniProtKB-KW"/>
</dbReference>
<dbReference type="GO" id="GO:0008017">
    <property type="term" value="F:microtubule binding"/>
    <property type="evidence" value="ECO:0000314"/>
    <property type="project" value="UniProtKB"/>
</dbReference>
<dbReference type="GO" id="GO:0003777">
    <property type="term" value="F:microtubule motor activity"/>
    <property type="evidence" value="ECO:0000315"/>
    <property type="project" value="UniProtKB"/>
</dbReference>
<dbReference type="GO" id="GO:0008574">
    <property type="term" value="F:plus-end-directed microtubule motor activity"/>
    <property type="evidence" value="ECO:0000318"/>
    <property type="project" value="GO_Central"/>
</dbReference>
<dbReference type="GO" id="GO:0019901">
    <property type="term" value="F:protein kinase binding"/>
    <property type="evidence" value="ECO:0000353"/>
    <property type="project" value="UniProtKB"/>
</dbReference>
<dbReference type="GO" id="GO:0051301">
    <property type="term" value="P:cell division"/>
    <property type="evidence" value="ECO:0007669"/>
    <property type="project" value="UniProtKB-KW"/>
</dbReference>
<dbReference type="GO" id="GO:0007018">
    <property type="term" value="P:microtubule-based movement"/>
    <property type="evidence" value="ECO:0007669"/>
    <property type="project" value="InterPro"/>
</dbReference>
<dbReference type="GO" id="GO:0090307">
    <property type="term" value="P:mitotic spindle assembly"/>
    <property type="evidence" value="ECO:0000318"/>
    <property type="project" value="GO_Central"/>
</dbReference>
<dbReference type="GO" id="GO:0051231">
    <property type="term" value="P:spindle elongation"/>
    <property type="evidence" value="ECO:0000318"/>
    <property type="project" value="GO_Central"/>
</dbReference>
<dbReference type="CDD" id="cd01364">
    <property type="entry name" value="KISc_BimC_Eg5"/>
    <property type="match status" value="1"/>
</dbReference>
<dbReference type="FunFam" id="3.40.850.10:FF:000035">
    <property type="entry name" value="Kinesin-like protein KIF11"/>
    <property type="match status" value="1"/>
</dbReference>
<dbReference type="Gene3D" id="3.40.850.10">
    <property type="entry name" value="Kinesin motor domain"/>
    <property type="match status" value="1"/>
</dbReference>
<dbReference type="InterPro" id="IPR047149">
    <property type="entry name" value="KIF11-like"/>
</dbReference>
<dbReference type="InterPro" id="IPR047241">
    <property type="entry name" value="KIF11-like_kin_motor_dom"/>
</dbReference>
<dbReference type="InterPro" id="IPR025901">
    <property type="entry name" value="Kinesin-assoc_MT-bd_dom"/>
</dbReference>
<dbReference type="InterPro" id="IPR019821">
    <property type="entry name" value="Kinesin_motor_CS"/>
</dbReference>
<dbReference type="InterPro" id="IPR001752">
    <property type="entry name" value="Kinesin_motor_dom"/>
</dbReference>
<dbReference type="InterPro" id="IPR036961">
    <property type="entry name" value="Kinesin_motor_dom_sf"/>
</dbReference>
<dbReference type="InterPro" id="IPR027417">
    <property type="entry name" value="P-loop_NTPase"/>
</dbReference>
<dbReference type="PANTHER" id="PTHR47970">
    <property type="entry name" value="KINESIN-LIKE PROTEIN KIF11"/>
    <property type="match status" value="1"/>
</dbReference>
<dbReference type="PANTHER" id="PTHR47970:SF26">
    <property type="entry name" value="KINESIN-LIKE PROTEIN KIF11"/>
    <property type="match status" value="1"/>
</dbReference>
<dbReference type="Pfam" id="PF00225">
    <property type="entry name" value="Kinesin"/>
    <property type="match status" value="1"/>
</dbReference>
<dbReference type="Pfam" id="PF13931">
    <property type="entry name" value="Microtub_bind"/>
    <property type="match status" value="1"/>
</dbReference>
<dbReference type="PRINTS" id="PR00380">
    <property type="entry name" value="KINESINHEAVY"/>
</dbReference>
<dbReference type="SMART" id="SM00129">
    <property type="entry name" value="KISc"/>
    <property type="match status" value="1"/>
</dbReference>
<dbReference type="SUPFAM" id="SSF52540">
    <property type="entry name" value="P-loop containing nucleoside triphosphate hydrolases"/>
    <property type="match status" value="1"/>
</dbReference>
<dbReference type="PROSITE" id="PS00411">
    <property type="entry name" value="KINESIN_MOTOR_1"/>
    <property type="match status" value="1"/>
</dbReference>
<dbReference type="PROSITE" id="PS50067">
    <property type="entry name" value="KINESIN_MOTOR_2"/>
    <property type="match status" value="1"/>
</dbReference>
<gene>
    <name type="primary">kif11-b</name>
    <name type="synonym">eg5</name>
</gene>
<name>KI11B_XENLA</name>